<comment type="interaction">
    <interactant intactId="EBI-20654730">
        <id>Q9FK10</id>
    </interactant>
    <interactant intactId="EBI-20654598">
        <id>F4I065</id>
        <label>At1g49100</label>
    </interactant>
    <organismsDiffer>false</organismsDiffer>
    <experiments>2</experiments>
</comment>
<comment type="interaction">
    <interactant intactId="EBI-20654730">
        <id>Q9FK10</id>
    </interactant>
    <interactant intactId="EBI-20652336">
        <id>A0A178WLG7</id>
        <label>At1g51790</label>
    </interactant>
    <organismsDiffer>false</organismsDiffer>
    <experiments>2</experiments>
</comment>
<comment type="interaction">
    <interactant intactId="EBI-20654730">
        <id>Q9FK10</id>
    </interactant>
    <interactant intactId="EBI-20656718">
        <id>A0A1P8ASI5</id>
        <label>At1g56120</label>
    </interactant>
    <organismsDiffer>false</organismsDiffer>
    <experiments>3</experiments>
</comment>
<comment type="interaction">
    <interactant intactId="EBI-20654730">
        <id>Q9FK10</id>
    </interactant>
    <interactant intactId="EBI-20662335">
        <id>O64556</id>
        <label>At2g19230</label>
    </interactant>
    <organismsDiffer>false</organismsDiffer>
    <experiments>4</experiments>
</comment>
<comment type="interaction">
    <interactant intactId="EBI-20654730">
        <id>Q9FK10</id>
    </interactant>
    <interactant intactId="EBI-941096">
        <id>Q9LIG2</id>
        <label>At3g21340</label>
    </interactant>
    <organismsDiffer>false</organismsDiffer>
    <experiments>2</experiments>
</comment>
<comment type="interaction">
    <interactant intactId="EBI-20654730">
        <id>Q9FK10</id>
    </interactant>
    <interactant intactId="EBI-20658889">
        <id>Q9SNA2</id>
        <label>F18L15.70</label>
    </interactant>
    <organismsDiffer>false</organismsDiffer>
    <experiments>3</experiments>
</comment>
<comment type="interaction">
    <interactant intactId="EBI-20654730">
        <id>Q9FK10</id>
    </interactant>
    <interactant intactId="EBI-20665360">
        <id>C0LGU0</id>
        <label>PRK1</label>
    </interactant>
    <organismsDiffer>false</organismsDiffer>
    <experiments>2</experiments>
</comment>
<comment type="subcellular location">
    <subcellularLocation>
        <location evidence="5">Membrane</location>
        <topology evidence="5">Single-pass membrane protein</topology>
    </subcellularLocation>
</comment>
<comment type="domain">
    <text>The protein kinase domain is predicted to be catalytically inactive.</text>
</comment>
<comment type="similarity">
    <text evidence="5">Belongs to the protein kinase superfamily.</text>
</comment>
<accession>Q9FK10</accession>
<accession>Q0WUK3</accession>
<keyword id="KW-0067">ATP-binding</keyword>
<keyword id="KW-0433">Leucine-rich repeat</keyword>
<keyword id="KW-0472">Membrane</keyword>
<keyword id="KW-0547">Nucleotide-binding</keyword>
<keyword id="KW-0597">Phosphoprotein</keyword>
<keyword id="KW-0675">Receptor</keyword>
<keyword id="KW-1185">Reference proteome</keyword>
<keyword id="KW-0677">Repeat</keyword>
<keyword id="KW-0732">Signal</keyword>
<keyword id="KW-0812">Transmembrane</keyword>
<keyword id="KW-1133">Transmembrane helix</keyword>
<evidence type="ECO:0000250" key="1">
    <source>
        <dbReference type="UniProtKB" id="Q94AG2"/>
    </source>
</evidence>
<evidence type="ECO:0000250" key="2">
    <source>
        <dbReference type="UniProtKB" id="Q94F62"/>
    </source>
</evidence>
<evidence type="ECO:0000255" key="3"/>
<evidence type="ECO:0000255" key="4">
    <source>
        <dbReference type="PROSITE-ProRule" id="PRU00159"/>
    </source>
</evidence>
<evidence type="ECO:0000305" key="5"/>
<dbReference type="EMBL" id="AB013388">
    <property type="protein sequence ID" value="BAB09794.1"/>
    <property type="molecule type" value="Genomic_DNA"/>
</dbReference>
<dbReference type="EMBL" id="CP002688">
    <property type="protein sequence ID" value="AED96339.1"/>
    <property type="molecule type" value="Genomic_DNA"/>
</dbReference>
<dbReference type="EMBL" id="AK227151">
    <property type="protein sequence ID" value="BAE99195.1"/>
    <property type="molecule type" value="mRNA"/>
</dbReference>
<dbReference type="RefSeq" id="NP_200144.1">
    <property type="nucleotide sequence ID" value="NM_124711.4"/>
</dbReference>
<dbReference type="SMR" id="Q9FK10"/>
<dbReference type="BioGRID" id="20658">
    <property type="interactions" value="40"/>
</dbReference>
<dbReference type="IntAct" id="Q9FK10">
    <property type="interactions" value="46"/>
</dbReference>
<dbReference type="STRING" id="3702.Q9FK10"/>
<dbReference type="iPTMnet" id="Q9FK10"/>
<dbReference type="PaxDb" id="3702-AT5G53320.1"/>
<dbReference type="ProteomicsDB" id="243159"/>
<dbReference type="EnsemblPlants" id="AT5G53320.1">
    <property type="protein sequence ID" value="AT5G53320.1"/>
    <property type="gene ID" value="AT5G53320"/>
</dbReference>
<dbReference type="GeneID" id="835413"/>
<dbReference type="Gramene" id="AT5G53320.1">
    <property type="protein sequence ID" value="AT5G53320.1"/>
    <property type="gene ID" value="AT5G53320"/>
</dbReference>
<dbReference type="KEGG" id="ath:AT5G53320"/>
<dbReference type="Araport" id="AT5G53320"/>
<dbReference type="TAIR" id="AT5G53320"/>
<dbReference type="eggNOG" id="ENOG502QTFK">
    <property type="taxonomic scope" value="Eukaryota"/>
</dbReference>
<dbReference type="HOGENOM" id="CLU_000288_92_6_1"/>
<dbReference type="InParanoid" id="Q9FK10"/>
<dbReference type="OMA" id="DMGSSAC"/>
<dbReference type="OrthoDB" id="676979at2759"/>
<dbReference type="PhylomeDB" id="Q9FK10"/>
<dbReference type="PRO" id="PR:Q9FK10"/>
<dbReference type="Proteomes" id="UP000006548">
    <property type="component" value="Chromosome 5"/>
</dbReference>
<dbReference type="ExpressionAtlas" id="Q9FK10">
    <property type="expression patterns" value="baseline and differential"/>
</dbReference>
<dbReference type="GO" id="GO:0005886">
    <property type="term" value="C:plasma membrane"/>
    <property type="evidence" value="ECO:0007005"/>
    <property type="project" value="TAIR"/>
</dbReference>
<dbReference type="GO" id="GO:0005524">
    <property type="term" value="F:ATP binding"/>
    <property type="evidence" value="ECO:0007669"/>
    <property type="project" value="UniProtKB-KW"/>
</dbReference>
<dbReference type="GO" id="GO:0004672">
    <property type="term" value="F:protein kinase activity"/>
    <property type="evidence" value="ECO:0007669"/>
    <property type="project" value="InterPro"/>
</dbReference>
<dbReference type="FunFam" id="3.30.200.20:FF:000307">
    <property type="entry name" value="pollen receptor-like kinase 1"/>
    <property type="match status" value="1"/>
</dbReference>
<dbReference type="FunFam" id="1.10.510.10:FF:001283">
    <property type="entry name" value="Probable inactive receptor kinase At5g53320"/>
    <property type="match status" value="1"/>
</dbReference>
<dbReference type="FunFam" id="3.80.10.10:FF:000234">
    <property type="entry name" value="Probable inactive receptor kinase RLK902"/>
    <property type="match status" value="1"/>
</dbReference>
<dbReference type="Gene3D" id="3.30.200.20">
    <property type="entry name" value="Phosphorylase Kinase, domain 1"/>
    <property type="match status" value="1"/>
</dbReference>
<dbReference type="Gene3D" id="3.80.10.10">
    <property type="entry name" value="Ribonuclease Inhibitor"/>
    <property type="match status" value="1"/>
</dbReference>
<dbReference type="Gene3D" id="1.10.510.10">
    <property type="entry name" value="Transferase(Phosphotransferase) domain 1"/>
    <property type="match status" value="1"/>
</dbReference>
<dbReference type="InterPro" id="IPR050994">
    <property type="entry name" value="At_inactive_RLKs"/>
</dbReference>
<dbReference type="InterPro" id="IPR011009">
    <property type="entry name" value="Kinase-like_dom_sf"/>
</dbReference>
<dbReference type="InterPro" id="IPR001611">
    <property type="entry name" value="Leu-rich_rpt"/>
</dbReference>
<dbReference type="InterPro" id="IPR032675">
    <property type="entry name" value="LRR_dom_sf"/>
</dbReference>
<dbReference type="InterPro" id="IPR013210">
    <property type="entry name" value="LRR_N_plant-typ"/>
</dbReference>
<dbReference type="InterPro" id="IPR000719">
    <property type="entry name" value="Prot_kinase_dom"/>
</dbReference>
<dbReference type="InterPro" id="IPR001245">
    <property type="entry name" value="Ser-Thr/Tyr_kinase_cat_dom"/>
</dbReference>
<dbReference type="PANTHER" id="PTHR48010">
    <property type="entry name" value="OS05G0588300 PROTEIN"/>
    <property type="match status" value="1"/>
</dbReference>
<dbReference type="PANTHER" id="PTHR48010:SF1">
    <property type="entry name" value="PROTEIN KINASE DOMAIN-CONTAINING PROTEIN"/>
    <property type="match status" value="1"/>
</dbReference>
<dbReference type="Pfam" id="PF00560">
    <property type="entry name" value="LRR_1"/>
    <property type="match status" value="5"/>
</dbReference>
<dbReference type="Pfam" id="PF08263">
    <property type="entry name" value="LRRNT_2"/>
    <property type="match status" value="1"/>
</dbReference>
<dbReference type="Pfam" id="PF07714">
    <property type="entry name" value="PK_Tyr_Ser-Thr"/>
    <property type="match status" value="1"/>
</dbReference>
<dbReference type="SUPFAM" id="SSF52058">
    <property type="entry name" value="L domain-like"/>
    <property type="match status" value="1"/>
</dbReference>
<dbReference type="SUPFAM" id="SSF56112">
    <property type="entry name" value="Protein kinase-like (PK-like)"/>
    <property type="match status" value="1"/>
</dbReference>
<dbReference type="PROSITE" id="PS50011">
    <property type="entry name" value="PROTEIN_KINASE_DOM"/>
    <property type="match status" value="1"/>
</dbReference>
<proteinExistence type="evidence at protein level"/>
<sequence>MKCQVVLILIVVIFNVCIEAETIKEDKHTLLQFVNNINHSHSLNWSPSLSICTKWTGVTCNSDHSSVDALHLAATGLRGDIELSIIARLSNLRFLILSSNNISGTFPTTLQALKNLTELKLDFNEFSGPLPSDLSSWERLQVLDLSNNRFNGSIPSSIGKLTLLHSLNLAYNKFSGEIPDLHIPGLKLLNLAHNNLTGTVPQSLQRFPLSAFVGNKVLAPVHSSLRKHTKHHNHVVLGIALSVCFAILALLAILLVIIIHNREEQRRSSKDKPSKRRKDSDPNVGEGDNKIVFFEGKNLVFDLEDLLRASAEVLGKGPFGTTYKVDLEDSATIVVKRIKEVSVPQREFEQQIENIGSIKHENVATLRGYFYSKDEKLVVYDYYEHGSLSTLLHGQKGLRDRKRLEWETRLNMVYGTARGVAHIHSQSGGKLVHGNIKSSNIFLNGKGYGCISGTGMATLMHSLPRHAVGYRAPEITDTRKGTQPSDVYSFGILIFEVLTGKSEVANLVRWVNSVVREEWTGEVFDEELLRCTQVEEEMVEMLQVGMVCTARLPEKRPNMIEVVRMVEEIRPEKLASGYRSEVSTGATTTPIGSLSGSPYIL</sequence>
<name>Y5332_ARATH</name>
<feature type="signal peptide" evidence="3">
    <location>
        <begin position="1"/>
        <end position="20"/>
    </location>
</feature>
<feature type="chain" id="PRO_0000324842" description="Probable inactive receptor kinase At5g53320">
    <location>
        <begin position="21"/>
        <end position="601"/>
    </location>
</feature>
<feature type="transmembrane region" description="Helical" evidence="3">
    <location>
        <begin position="239"/>
        <end position="259"/>
    </location>
</feature>
<feature type="repeat" description="LRR 1">
    <location>
        <begin position="91"/>
        <end position="114"/>
    </location>
</feature>
<feature type="repeat" description="LRR 2">
    <location>
        <begin position="115"/>
        <end position="136"/>
    </location>
</feature>
<feature type="repeat" description="LRR 3">
    <location>
        <begin position="139"/>
        <end position="161"/>
    </location>
</feature>
<feature type="repeat" description="LRR 4">
    <location>
        <begin position="163"/>
        <end position="184"/>
    </location>
</feature>
<feature type="repeat" description="LRR 5">
    <location>
        <begin position="185"/>
        <end position="206"/>
    </location>
</feature>
<feature type="domain" description="Protein kinase" evidence="4">
    <location>
        <begin position="308"/>
        <end position="569"/>
    </location>
</feature>
<feature type="binding site" evidence="4">
    <location>
        <begin position="314"/>
        <end position="322"/>
    </location>
    <ligand>
        <name>ATP</name>
        <dbReference type="ChEBI" id="CHEBI:30616"/>
    </ligand>
</feature>
<feature type="binding site" evidence="4">
    <location>
        <position position="336"/>
    </location>
    <ligand>
        <name>ATP</name>
        <dbReference type="ChEBI" id="CHEBI:30616"/>
    </ligand>
</feature>
<feature type="modified residue" description="Phosphoserine" evidence="2">
    <location>
        <position position="310"/>
    </location>
</feature>
<feature type="modified residue" description="Phosphoserine" evidence="1">
    <location>
        <position position="387"/>
    </location>
</feature>
<feature type="modified residue" description="Phosphothreonine" evidence="1">
    <location>
        <position position="408"/>
    </location>
</feature>
<feature type="modified residue" description="Phosphothreonine" evidence="1">
    <location>
        <position position="478"/>
    </location>
</feature>
<feature type="modified residue" description="Phosphothreonine" evidence="1">
    <location>
        <position position="549"/>
    </location>
</feature>
<feature type="sequence conflict" description="In Ref. 3; BAE99195." evidence="5" ref="3">
    <original>R</original>
    <variation>S</variation>
    <location>
        <position position="88"/>
    </location>
</feature>
<gene>
    <name type="ordered locus">At5g53320</name>
    <name type="ORF">K19E1.12</name>
</gene>
<reference key="1">
    <citation type="journal article" date="1998" name="DNA Res.">
        <title>Structural analysis of Arabidopsis thaliana chromosome 5. VI. Sequence features of the regions of 1,367,185 bp covered by 19 physically assigned P1 and TAC clones.</title>
        <authorList>
            <person name="Kotani H."/>
            <person name="Nakamura Y."/>
            <person name="Sato S."/>
            <person name="Asamizu E."/>
            <person name="Kaneko T."/>
            <person name="Miyajima N."/>
            <person name="Tabata S."/>
        </authorList>
    </citation>
    <scope>NUCLEOTIDE SEQUENCE [LARGE SCALE GENOMIC DNA]</scope>
    <source>
        <strain>cv. Columbia</strain>
    </source>
</reference>
<reference key="2">
    <citation type="journal article" date="2017" name="Plant J.">
        <title>Araport11: a complete reannotation of the Arabidopsis thaliana reference genome.</title>
        <authorList>
            <person name="Cheng C.Y."/>
            <person name="Krishnakumar V."/>
            <person name="Chan A.P."/>
            <person name="Thibaud-Nissen F."/>
            <person name="Schobel S."/>
            <person name="Town C.D."/>
        </authorList>
    </citation>
    <scope>GENOME REANNOTATION</scope>
    <source>
        <strain>cv. Columbia</strain>
    </source>
</reference>
<reference key="3">
    <citation type="submission" date="2006-07" db="EMBL/GenBank/DDBJ databases">
        <title>Large-scale analysis of RIKEN Arabidopsis full-length (RAFL) cDNAs.</title>
        <authorList>
            <person name="Totoki Y."/>
            <person name="Seki M."/>
            <person name="Ishida J."/>
            <person name="Nakajima M."/>
            <person name="Enju A."/>
            <person name="Kamiya A."/>
            <person name="Narusaka M."/>
            <person name="Shin-i T."/>
            <person name="Nakagawa M."/>
            <person name="Sakamoto N."/>
            <person name="Oishi K."/>
            <person name="Kohara Y."/>
            <person name="Kobayashi M."/>
            <person name="Toyoda A."/>
            <person name="Sakaki Y."/>
            <person name="Sakurai T."/>
            <person name="Iida K."/>
            <person name="Akiyama K."/>
            <person name="Satou M."/>
            <person name="Toyoda T."/>
            <person name="Konagaya A."/>
            <person name="Carninci P."/>
            <person name="Kawai J."/>
            <person name="Hayashizaki Y."/>
            <person name="Shinozaki K."/>
        </authorList>
    </citation>
    <scope>NUCLEOTIDE SEQUENCE [LARGE SCALE MRNA]</scope>
    <source>
        <strain>cv. Columbia</strain>
    </source>
</reference>
<organism>
    <name type="scientific">Arabidopsis thaliana</name>
    <name type="common">Mouse-ear cress</name>
    <dbReference type="NCBI Taxonomy" id="3702"/>
    <lineage>
        <taxon>Eukaryota</taxon>
        <taxon>Viridiplantae</taxon>
        <taxon>Streptophyta</taxon>
        <taxon>Embryophyta</taxon>
        <taxon>Tracheophyta</taxon>
        <taxon>Spermatophyta</taxon>
        <taxon>Magnoliopsida</taxon>
        <taxon>eudicotyledons</taxon>
        <taxon>Gunneridae</taxon>
        <taxon>Pentapetalae</taxon>
        <taxon>rosids</taxon>
        <taxon>malvids</taxon>
        <taxon>Brassicales</taxon>
        <taxon>Brassicaceae</taxon>
        <taxon>Camelineae</taxon>
        <taxon>Arabidopsis</taxon>
    </lineage>
</organism>
<protein>
    <recommendedName>
        <fullName>Probable inactive receptor kinase At5g53320</fullName>
    </recommendedName>
</protein>